<organism>
    <name type="scientific">Lactobacillus delbrueckii subsp. bulgaricus (strain ATCC 11842 / DSM 20081 / BCRC 10696 / JCM 1002 / NBRC 13953 / NCIMB 11778 / NCTC 12712 / WDCM 00102 / Lb 14)</name>
    <dbReference type="NCBI Taxonomy" id="390333"/>
    <lineage>
        <taxon>Bacteria</taxon>
        <taxon>Bacillati</taxon>
        <taxon>Bacillota</taxon>
        <taxon>Bacilli</taxon>
        <taxon>Lactobacillales</taxon>
        <taxon>Lactobacillaceae</taxon>
        <taxon>Lactobacillus</taxon>
    </lineage>
</organism>
<sequence>MKLNELHPSEGSRHARKRVGRGTSSGFGKTSGRGQKGQHARSGGNTRLGFEGGQMPLFRTMPKRGFKNINRKEYAIVNLADLNKFEEGSVVDFEALKAKGLVKKQLSGVKVLGNGDLNVKLTVKVNKVSEAAKSAIEAAGGTVEVI</sequence>
<accession>Q1GBJ9</accession>
<name>RL15_LACDA</name>
<evidence type="ECO:0000255" key="1">
    <source>
        <dbReference type="HAMAP-Rule" id="MF_01341"/>
    </source>
</evidence>
<evidence type="ECO:0000256" key="2">
    <source>
        <dbReference type="SAM" id="MobiDB-lite"/>
    </source>
</evidence>
<evidence type="ECO:0000305" key="3"/>
<protein>
    <recommendedName>
        <fullName evidence="1">Large ribosomal subunit protein uL15</fullName>
    </recommendedName>
    <alternativeName>
        <fullName evidence="3">50S ribosomal protein L15</fullName>
    </alternativeName>
</protein>
<comment type="function">
    <text evidence="1">Binds to the 23S rRNA.</text>
</comment>
<comment type="subunit">
    <text evidence="1">Part of the 50S ribosomal subunit.</text>
</comment>
<comment type="similarity">
    <text evidence="1">Belongs to the universal ribosomal protein uL15 family.</text>
</comment>
<proteinExistence type="inferred from homology"/>
<gene>
    <name evidence="1" type="primary">rplO</name>
    <name type="ordered locus">Ldb0415</name>
</gene>
<dbReference type="EMBL" id="CR954253">
    <property type="protein sequence ID" value="CAI97250.1"/>
    <property type="molecule type" value="Genomic_DNA"/>
</dbReference>
<dbReference type="RefSeq" id="WP_002878182.1">
    <property type="nucleotide sequence ID" value="NZ_JQAV01000001.1"/>
</dbReference>
<dbReference type="SMR" id="Q1GBJ9"/>
<dbReference type="STRING" id="390333.Ldb0415"/>
<dbReference type="GeneID" id="69668445"/>
<dbReference type="KEGG" id="ldb:Ldb0415"/>
<dbReference type="eggNOG" id="COG0200">
    <property type="taxonomic scope" value="Bacteria"/>
</dbReference>
<dbReference type="HOGENOM" id="CLU_055188_4_2_9"/>
<dbReference type="BioCyc" id="LDEL390333:LDB_RS01765-MONOMER"/>
<dbReference type="Proteomes" id="UP000001259">
    <property type="component" value="Chromosome"/>
</dbReference>
<dbReference type="GO" id="GO:0022625">
    <property type="term" value="C:cytosolic large ribosomal subunit"/>
    <property type="evidence" value="ECO:0007669"/>
    <property type="project" value="TreeGrafter"/>
</dbReference>
<dbReference type="GO" id="GO:0019843">
    <property type="term" value="F:rRNA binding"/>
    <property type="evidence" value="ECO:0007669"/>
    <property type="project" value="UniProtKB-UniRule"/>
</dbReference>
<dbReference type="GO" id="GO:0003735">
    <property type="term" value="F:structural constituent of ribosome"/>
    <property type="evidence" value="ECO:0007669"/>
    <property type="project" value="InterPro"/>
</dbReference>
<dbReference type="GO" id="GO:0006412">
    <property type="term" value="P:translation"/>
    <property type="evidence" value="ECO:0007669"/>
    <property type="project" value="UniProtKB-UniRule"/>
</dbReference>
<dbReference type="Gene3D" id="3.100.10.10">
    <property type="match status" value="1"/>
</dbReference>
<dbReference type="HAMAP" id="MF_01341">
    <property type="entry name" value="Ribosomal_uL15"/>
    <property type="match status" value="1"/>
</dbReference>
<dbReference type="InterPro" id="IPR030878">
    <property type="entry name" value="Ribosomal_uL15"/>
</dbReference>
<dbReference type="InterPro" id="IPR021131">
    <property type="entry name" value="Ribosomal_uL15/eL18"/>
</dbReference>
<dbReference type="InterPro" id="IPR036227">
    <property type="entry name" value="Ribosomal_uL15/eL18_sf"/>
</dbReference>
<dbReference type="InterPro" id="IPR005749">
    <property type="entry name" value="Ribosomal_uL15_bac-type"/>
</dbReference>
<dbReference type="InterPro" id="IPR001196">
    <property type="entry name" value="Ribosomal_uL15_CS"/>
</dbReference>
<dbReference type="NCBIfam" id="TIGR01071">
    <property type="entry name" value="rplO_bact"/>
    <property type="match status" value="1"/>
</dbReference>
<dbReference type="PANTHER" id="PTHR12934">
    <property type="entry name" value="50S RIBOSOMAL PROTEIN L15"/>
    <property type="match status" value="1"/>
</dbReference>
<dbReference type="PANTHER" id="PTHR12934:SF11">
    <property type="entry name" value="LARGE RIBOSOMAL SUBUNIT PROTEIN UL15M"/>
    <property type="match status" value="1"/>
</dbReference>
<dbReference type="Pfam" id="PF00828">
    <property type="entry name" value="Ribosomal_L27A"/>
    <property type="match status" value="1"/>
</dbReference>
<dbReference type="SUPFAM" id="SSF52080">
    <property type="entry name" value="Ribosomal proteins L15p and L18e"/>
    <property type="match status" value="1"/>
</dbReference>
<dbReference type="PROSITE" id="PS00475">
    <property type="entry name" value="RIBOSOMAL_L15"/>
    <property type="match status" value="1"/>
</dbReference>
<reference key="1">
    <citation type="journal article" date="2006" name="Proc. Natl. Acad. Sci. U.S.A.">
        <title>The complete genome sequence of Lactobacillus bulgaricus reveals extensive and ongoing reductive evolution.</title>
        <authorList>
            <person name="van de Guchte M."/>
            <person name="Penaud S."/>
            <person name="Grimaldi C."/>
            <person name="Barbe V."/>
            <person name="Bryson K."/>
            <person name="Nicolas P."/>
            <person name="Robert C."/>
            <person name="Oztas S."/>
            <person name="Mangenot S."/>
            <person name="Couloux A."/>
            <person name="Loux V."/>
            <person name="Dervyn R."/>
            <person name="Bossy R."/>
            <person name="Bolotin A."/>
            <person name="Batto J.-M."/>
            <person name="Walunas T."/>
            <person name="Gibrat J.-F."/>
            <person name="Bessieres P."/>
            <person name="Weissenbach J."/>
            <person name="Ehrlich S.D."/>
            <person name="Maguin E."/>
        </authorList>
    </citation>
    <scope>NUCLEOTIDE SEQUENCE [LARGE SCALE GENOMIC DNA]</scope>
    <source>
        <strain>ATCC 11842 / DSM 20081 / BCRC 10696 / JCM 1002 / NBRC 13953 / NCIMB 11778 / NCTC 12712 / WDCM 00102 / Lb 14</strain>
    </source>
</reference>
<keyword id="KW-1185">Reference proteome</keyword>
<keyword id="KW-0687">Ribonucleoprotein</keyword>
<keyword id="KW-0689">Ribosomal protein</keyword>
<keyword id="KW-0694">RNA-binding</keyword>
<keyword id="KW-0699">rRNA-binding</keyword>
<feature type="chain" id="PRO_0000251521" description="Large ribosomal subunit protein uL15">
    <location>
        <begin position="1"/>
        <end position="146"/>
    </location>
</feature>
<feature type="region of interest" description="Disordered" evidence="2">
    <location>
        <begin position="1"/>
        <end position="56"/>
    </location>
</feature>
<feature type="compositionally biased region" description="Basic and acidic residues" evidence="2">
    <location>
        <begin position="1"/>
        <end position="13"/>
    </location>
</feature>
<feature type="compositionally biased region" description="Gly residues" evidence="2">
    <location>
        <begin position="23"/>
        <end position="35"/>
    </location>
</feature>